<evidence type="ECO:0000255" key="1">
    <source>
        <dbReference type="HAMAP-Rule" id="MF_01320"/>
    </source>
</evidence>
<evidence type="ECO:0000256" key="2">
    <source>
        <dbReference type="SAM" id="MobiDB-lite"/>
    </source>
</evidence>
<evidence type="ECO:0000305" key="3"/>
<organism>
    <name type="scientific">Anaplasma marginale (strain Florida)</name>
    <dbReference type="NCBI Taxonomy" id="320483"/>
    <lineage>
        <taxon>Bacteria</taxon>
        <taxon>Pseudomonadati</taxon>
        <taxon>Pseudomonadota</taxon>
        <taxon>Alphaproteobacteria</taxon>
        <taxon>Rickettsiales</taxon>
        <taxon>Anaplasmataceae</taxon>
        <taxon>Anaplasma</taxon>
    </lineage>
</organism>
<reference key="1">
    <citation type="journal article" date="2009" name="BMC Genomics">
        <title>Conservation in the face of diversity: multistrain analysis of an intracellular bacterium.</title>
        <authorList>
            <person name="Dark M.J."/>
            <person name="Herndon D.R."/>
            <person name="Kappmeyer L.S."/>
            <person name="Gonzales M.P."/>
            <person name="Nordeen E."/>
            <person name="Palmer G.H."/>
            <person name="Knowles D.P. Jr."/>
            <person name="Brayton K.A."/>
        </authorList>
    </citation>
    <scope>NUCLEOTIDE SEQUENCE [LARGE SCALE GENOMIC DNA]</scope>
    <source>
        <strain>Florida</strain>
    </source>
</reference>
<protein>
    <recommendedName>
        <fullName evidence="1">Large ribosomal subunit protein uL2</fullName>
    </recommendedName>
    <alternativeName>
        <fullName evidence="3">50S ribosomal protein L2</fullName>
    </alternativeName>
</protein>
<accession>B9KJ67</accession>
<gene>
    <name evidence="1" type="primary">rplB</name>
    <name type="ordered locus">AMF_693</name>
</gene>
<sequence>MSLKVLNPVTPSLRGTVMVNRVALWRGKPEKSLVVGRVSSGGRNAHGVITVRHRGGGHKRLHRVVDLKRNKDGVQAVVQRLEYDPNRTAFLALVRYEDGELSYILAPDGLKVSDVVVSGVGSDVLPGNCLQLGSIPAGTFVHNVELRPCGGGIIARAAGSYAQVMGRDGAYVLLRLGSGEVRKILALCRATVGVVSNLNNQNIKLGKAGRNRWLGFRPTVRGVAMNPVDHPHGGGEGKTSGGRNSVTPWGVPTKGKKTRKRGKHSDKYIKVSSVRKR</sequence>
<feature type="chain" id="PRO_1000165716" description="Large ribosomal subunit protein uL2">
    <location>
        <begin position="1"/>
        <end position="277"/>
    </location>
</feature>
<feature type="region of interest" description="Disordered" evidence="2">
    <location>
        <begin position="225"/>
        <end position="277"/>
    </location>
</feature>
<feature type="compositionally biased region" description="Basic residues" evidence="2">
    <location>
        <begin position="254"/>
        <end position="264"/>
    </location>
</feature>
<keyword id="KW-1185">Reference proteome</keyword>
<keyword id="KW-0687">Ribonucleoprotein</keyword>
<keyword id="KW-0689">Ribosomal protein</keyword>
<keyword id="KW-0694">RNA-binding</keyword>
<keyword id="KW-0699">rRNA-binding</keyword>
<comment type="function">
    <text evidence="1">One of the primary rRNA binding proteins. Required for association of the 30S and 50S subunits to form the 70S ribosome, for tRNA binding and peptide bond formation. It has been suggested to have peptidyltransferase activity; this is somewhat controversial. Makes several contacts with the 16S rRNA in the 70S ribosome.</text>
</comment>
<comment type="subunit">
    <text evidence="1">Part of the 50S ribosomal subunit. Forms a bridge to the 30S subunit in the 70S ribosome.</text>
</comment>
<comment type="similarity">
    <text evidence="1">Belongs to the universal ribosomal protein uL2 family.</text>
</comment>
<dbReference type="EMBL" id="CP001079">
    <property type="protein sequence ID" value="ACM49529.1"/>
    <property type="molecule type" value="Genomic_DNA"/>
</dbReference>
<dbReference type="RefSeq" id="WP_010265300.1">
    <property type="nucleotide sequence ID" value="NZ_AFMS01000137.1"/>
</dbReference>
<dbReference type="SMR" id="B9KJ67"/>
<dbReference type="STRING" id="320483.AMF_693"/>
<dbReference type="GeneID" id="7397875"/>
<dbReference type="KEGG" id="amf:AMF_693"/>
<dbReference type="eggNOG" id="COG0090">
    <property type="taxonomic scope" value="Bacteria"/>
</dbReference>
<dbReference type="HOGENOM" id="CLU_036235_2_1_5"/>
<dbReference type="Proteomes" id="UP000007307">
    <property type="component" value="Chromosome"/>
</dbReference>
<dbReference type="GO" id="GO:0015934">
    <property type="term" value="C:large ribosomal subunit"/>
    <property type="evidence" value="ECO:0007669"/>
    <property type="project" value="InterPro"/>
</dbReference>
<dbReference type="GO" id="GO:0019843">
    <property type="term" value="F:rRNA binding"/>
    <property type="evidence" value="ECO:0007669"/>
    <property type="project" value="UniProtKB-UniRule"/>
</dbReference>
<dbReference type="GO" id="GO:0003735">
    <property type="term" value="F:structural constituent of ribosome"/>
    <property type="evidence" value="ECO:0007669"/>
    <property type="project" value="InterPro"/>
</dbReference>
<dbReference type="GO" id="GO:0016740">
    <property type="term" value="F:transferase activity"/>
    <property type="evidence" value="ECO:0007669"/>
    <property type="project" value="InterPro"/>
</dbReference>
<dbReference type="GO" id="GO:0002181">
    <property type="term" value="P:cytoplasmic translation"/>
    <property type="evidence" value="ECO:0007669"/>
    <property type="project" value="TreeGrafter"/>
</dbReference>
<dbReference type="FunFam" id="2.30.30.30:FF:000001">
    <property type="entry name" value="50S ribosomal protein L2"/>
    <property type="match status" value="1"/>
</dbReference>
<dbReference type="FunFam" id="4.10.950.10:FF:000001">
    <property type="entry name" value="50S ribosomal protein L2"/>
    <property type="match status" value="1"/>
</dbReference>
<dbReference type="Gene3D" id="2.30.30.30">
    <property type="match status" value="1"/>
</dbReference>
<dbReference type="Gene3D" id="2.40.50.140">
    <property type="entry name" value="Nucleic acid-binding proteins"/>
    <property type="match status" value="1"/>
</dbReference>
<dbReference type="Gene3D" id="4.10.950.10">
    <property type="entry name" value="Ribosomal protein L2, domain 3"/>
    <property type="match status" value="1"/>
</dbReference>
<dbReference type="HAMAP" id="MF_01320_B">
    <property type="entry name" value="Ribosomal_uL2_B"/>
    <property type="match status" value="1"/>
</dbReference>
<dbReference type="InterPro" id="IPR012340">
    <property type="entry name" value="NA-bd_OB-fold"/>
</dbReference>
<dbReference type="InterPro" id="IPR014722">
    <property type="entry name" value="Rib_uL2_dom2"/>
</dbReference>
<dbReference type="InterPro" id="IPR002171">
    <property type="entry name" value="Ribosomal_uL2"/>
</dbReference>
<dbReference type="InterPro" id="IPR005880">
    <property type="entry name" value="Ribosomal_uL2_bac/org-type"/>
</dbReference>
<dbReference type="InterPro" id="IPR022669">
    <property type="entry name" value="Ribosomal_uL2_C"/>
</dbReference>
<dbReference type="InterPro" id="IPR022671">
    <property type="entry name" value="Ribosomal_uL2_CS"/>
</dbReference>
<dbReference type="InterPro" id="IPR014726">
    <property type="entry name" value="Ribosomal_uL2_dom3"/>
</dbReference>
<dbReference type="InterPro" id="IPR022666">
    <property type="entry name" value="Ribosomal_uL2_RNA-bd_dom"/>
</dbReference>
<dbReference type="InterPro" id="IPR008991">
    <property type="entry name" value="Translation_prot_SH3-like_sf"/>
</dbReference>
<dbReference type="NCBIfam" id="TIGR01171">
    <property type="entry name" value="rplB_bact"/>
    <property type="match status" value="1"/>
</dbReference>
<dbReference type="PANTHER" id="PTHR13691:SF5">
    <property type="entry name" value="LARGE RIBOSOMAL SUBUNIT PROTEIN UL2M"/>
    <property type="match status" value="1"/>
</dbReference>
<dbReference type="PANTHER" id="PTHR13691">
    <property type="entry name" value="RIBOSOMAL PROTEIN L2"/>
    <property type="match status" value="1"/>
</dbReference>
<dbReference type="Pfam" id="PF00181">
    <property type="entry name" value="Ribosomal_L2"/>
    <property type="match status" value="1"/>
</dbReference>
<dbReference type="Pfam" id="PF03947">
    <property type="entry name" value="Ribosomal_L2_C"/>
    <property type="match status" value="1"/>
</dbReference>
<dbReference type="PIRSF" id="PIRSF002158">
    <property type="entry name" value="Ribosomal_L2"/>
    <property type="match status" value="1"/>
</dbReference>
<dbReference type="SMART" id="SM01383">
    <property type="entry name" value="Ribosomal_L2"/>
    <property type="match status" value="1"/>
</dbReference>
<dbReference type="SMART" id="SM01382">
    <property type="entry name" value="Ribosomal_L2_C"/>
    <property type="match status" value="1"/>
</dbReference>
<dbReference type="SUPFAM" id="SSF50249">
    <property type="entry name" value="Nucleic acid-binding proteins"/>
    <property type="match status" value="1"/>
</dbReference>
<dbReference type="SUPFAM" id="SSF50104">
    <property type="entry name" value="Translation proteins SH3-like domain"/>
    <property type="match status" value="1"/>
</dbReference>
<dbReference type="PROSITE" id="PS00467">
    <property type="entry name" value="RIBOSOMAL_L2"/>
    <property type="match status" value="1"/>
</dbReference>
<name>RL2_ANAMF</name>
<proteinExistence type="inferred from homology"/>